<accession>Q2FTF1</accession>
<sequence length="454" mass="47698">MINILEVNETNNMIEQEKLDVRTITLGISLLDCCDASLDTLNQKIYAKITRLARNLVSTGREIELEYGIPIVNKRISVTPIALIAGSACQSPEDFVSIAQTLDKAAADMGVNFIGGYSAIVSKGMTWTDELLIRSIPHALSATERVCSSVNIGSTKTGINMDAVRLMGQIIKETAEATQEQNSLGCAKLVVFCNAPDDNPFMAGAFHGISEADAVIHVGVSGPGVVKHALESVRGKDFEVLCETVKKTAFKVTRVGQLVAQVASERLGVPFGIVDLSLAPTPSVGDSVAEILEEMGLESVGAPGTTAALALLNDQVKKGGVMASSFVGGLSGAFIPVSEDQGMIDAVIRGSLTIEKLEAMTCVCSVGLDMIAIPGSTPASTISGIIADEAAIGMINQKTTAVRLIPVIGKDVGDMVEFGGLLGHAPVQQVNTFDCSKFINRGGRIPAPIHSFRN</sequence>
<comment type="similarity">
    <text evidence="1">Belongs to the UPF0210 family.</text>
</comment>
<protein>
    <recommendedName>
        <fullName evidence="1">UPF0210 protein Mhun_2657</fullName>
    </recommendedName>
</protein>
<name>Y2657_METHJ</name>
<evidence type="ECO:0000255" key="1">
    <source>
        <dbReference type="HAMAP-Rule" id="MF_01221"/>
    </source>
</evidence>
<proteinExistence type="inferred from homology"/>
<dbReference type="EMBL" id="CP000254">
    <property type="protein sequence ID" value="ABD42354.1"/>
    <property type="molecule type" value="Genomic_DNA"/>
</dbReference>
<dbReference type="RefSeq" id="WP_011449610.1">
    <property type="nucleotide sequence ID" value="NC_007796.1"/>
</dbReference>
<dbReference type="SMR" id="Q2FTF1"/>
<dbReference type="STRING" id="323259.Mhun_2657"/>
<dbReference type="EnsemblBacteria" id="ABD42354">
    <property type="protein sequence ID" value="ABD42354"/>
    <property type="gene ID" value="Mhun_2657"/>
</dbReference>
<dbReference type="GeneID" id="3924287"/>
<dbReference type="KEGG" id="mhu:Mhun_2657"/>
<dbReference type="eggNOG" id="arCOG04321">
    <property type="taxonomic scope" value="Archaea"/>
</dbReference>
<dbReference type="HOGENOM" id="CLU_048704_0_0_2"/>
<dbReference type="InParanoid" id="Q2FTF1"/>
<dbReference type="OrthoDB" id="21376at2157"/>
<dbReference type="Proteomes" id="UP000001941">
    <property type="component" value="Chromosome"/>
</dbReference>
<dbReference type="CDD" id="cd08025">
    <property type="entry name" value="RNR_PFL_like_DUF711"/>
    <property type="match status" value="1"/>
</dbReference>
<dbReference type="Gene3D" id="3.20.70.20">
    <property type="match status" value="1"/>
</dbReference>
<dbReference type="HAMAP" id="MF_01221">
    <property type="entry name" value="UPF0210"/>
    <property type="match status" value="1"/>
</dbReference>
<dbReference type="InterPro" id="IPR007841">
    <property type="entry name" value="UPF0210"/>
</dbReference>
<dbReference type="NCBIfam" id="NF003700">
    <property type="entry name" value="PRK05313.1"/>
    <property type="match status" value="1"/>
</dbReference>
<dbReference type="PANTHER" id="PTHR37560:SF1">
    <property type="entry name" value="UPF0210 PROTEIN MJ1665"/>
    <property type="match status" value="1"/>
</dbReference>
<dbReference type="PANTHER" id="PTHR37560">
    <property type="entry name" value="UPF0210 PROTEIN SPR0218"/>
    <property type="match status" value="1"/>
</dbReference>
<dbReference type="Pfam" id="PF05167">
    <property type="entry name" value="DUF711"/>
    <property type="match status" value="1"/>
</dbReference>
<dbReference type="SUPFAM" id="SSF51998">
    <property type="entry name" value="PFL-like glycyl radical enzymes"/>
    <property type="match status" value="1"/>
</dbReference>
<reference key="1">
    <citation type="journal article" date="2016" name="Stand. Genomic Sci.">
        <title>Complete genome sequence of Methanospirillum hungatei type strain JF1.</title>
        <authorList>
            <person name="Gunsalus R.P."/>
            <person name="Cook L.E."/>
            <person name="Crable B."/>
            <person name="Rohlin L."/>
            <person name="McDonald E."/>
            <person name="Mouttaki H."/>
            <person name="Sieber J.R."/>
            <person name="Poweleit N."/>
            <person name="Zhou H."/>
            <person name="Lapidus A.L."/>
            <person name="Daligault H.E."/>
            <person name="Land M."/>
            <person name="Gilna P."/>
            <person name="Ivanova N."/>
            <person name="Kyrpides N."/>
            <person name="Culley D.E."/>
            <person name="McInerney M.J."/>
        </authorList>
    </citation>
    <scope>NUCLEOTIDE SEQUENCE [LARGE SCALE GENOMIC DNA]</scope>
    <source>
        <strain>ATCC 27890 / DSM 864 / NBRC 100397 / JF-1</strain>
    </source>
</reference>
<gene>
    <name type="ordered locus">Mhun_2657</name>
</gene>
<keyword id="KW-1185">Reference proteome</keyword>
<feature type="chain" id="PRO_1000066763" description="UPF0210 protein Mhun_2657">
    <location>
        <begin position="1"/>
        <end position="454"/>
    </location>
</feature>
<organism>
    <name type="scientific">Methanospirillum hungatei JF-1 (strain ATCC 27890 / DSM 864 / NBRC 100397 / JF-1)</name>
    <dbReference type="NCBI Taxonomy" id="323259"/>
    <lineage>
        <taxon>Archaea</taxon>
        <taxon>Methanobacteriati</taxon>
        <taxon>Methanobacteriota</taxon>
        <taxon>Stenosarchaea group</taxon>
        <taxon>Methanomicrobia</taxon>
        <taxon>Methanomicrobiales</taxon>
        <taxon>Methanospirillaceae</taxon>
        <taxon>Methanospirillum</taxon>
    </lineage>
</organism>